<proteinExistence type="inferred from homology"/>
<comment type="similarity">
    <text evidence="1">Belongs to the eukaryotic ribosomal protein eL14 family.</text>
</comment>
<evidence type="ECO:0000255" key="1">
    <source>
        <dbReference type="HAMAP-Rule" id="MF_00721"/>
    </source>
</evidence>
<evidence type="ECO:0000305" key="2"/>
<accession>C3MZ69</accession>
<name>RL14E_SACI3</name>
<gene>
    <name evidence="1" type="primary">rpl14e</name>
    <name type="ordered locus">M1627_1826</name>
</gene>
<protein>
    <recommendedName>
        <fullName evidence="1">Large ribosomal subunit protein eL14</fullName>
    </recommendedName>
    <alternativeName>
        <fullName evidence="2">50S ribosomal protein L14e</fullName>
    </alternativeName>
</protein>
<dbReference type="EMBL" id="CP001401">
    <property type="protein sequence ID" value="ACP55701.1"/>
    <property type="molecule type" value="Genomic_DNA"/>
</dbReference>
<dbReference type="RefSeq" id="WP_012713922.1">
    <property type="nucleotide sequence ID" value="NC_012632.1"/>
</dbReference>
<dbReference type="SMR" id="C3MZ69"/>
<dbReference type="KEGG" id="sim:M1627_1826"/>
<dbReference type="HOGENOM" id="CLU_183474_0_0_2"/>
<dbReference type="Proteomes" id="UP000002307">
    <property type="component" value="Chromosome"/>
</dbReference>
<dbReference type="GO" id="GO:0022625">
    <property type="term" value="C:cytosolic large ribosomal subunit"/>
    <property type="evidence" value="ECO:0007669"/>
    <property type="project" value="TreeGrafter"/>
</dbReference>
<dbReference type="GO" id="GO:0003723">
    <property type="term" value="F:RNA binding"/>
    <property type="evidence" value="ECO:0007669"/>
    <property type="project" value="InterPro"/>
</dbReference>
<dbReference type="GO" id="GO:0003735">
    <property type="term" value="F:structural constituent of ribosome"/>
    <property type="evidence" value="ECO:0007669"/>
    <property type="project" value="InterPro"/>
</dbReference>
<dbReference type="GO" id="GO:0042273">
    <property type="term" value="P:ribosomal large subunit biogenesis"/>
    <property type="evidence" value="ECO:0007669"/>
    <property type="project" value="TreeGrafter"/>
</dbReference>
<dbReference type="GO" id="GO:0006412">
    <property type="term" value="P:translation"/>
    <property type="evidence" value="ECO:0007669"/>
    <property type="project" value="UniProtKB-UniRule"/>
</dbReference>
<dbReference type="CDD" id="cd23702">
    <property type="entry name" value="eL14"/>
    <property type="match status" value="1"/>
</dbReference>
<dbReference type="FunFam" id="2.30.30.30:FF:000045">
    <property type="entry name" value="50S ribosomal protein L14e"/>
    <property type="match status" value="1"/>
</dbReference>
<dbReference type="Gene3D" id="2.30.30.30">
    <property type="match status" value="1"/>
</dbReference>
<dbReference type="HAMAP" id="MF_00721">
    <property type="entry name" value="Ribosomal_eL14"/>
    <property type="match status" value="1"/>
</dbReference>
<dbReference type="InterPro" id="IPR014722">
    <property type="entry name" value="Rib_uL2_dom2"/>
</dbReference>
<dbReference type="InterPro" id="IPR039660">
    <property type="entry name" value="Ribosomal_eL14"/>
</dbReference>
<dbReference type="InterPro" id="IPR023651">
    <property type="entry name" value="Ribosomal_eL14_arc"/>
</dbReference>
<dbReference type="InterPro" id="IPR008991">
    <property type="entry name" value="Translation_prot_SH3-like_sf"/>
</dbReference>
<dbReference type="NCBIfam" id="NF003320">
    <property type="entry name" value="PRK04333.1"/>
    <property type="match status" value="1"/>
</dbReference>
<dbReference type="PANTHER" id="PTHR11127">
    <property type="entry name" value="60S RIBOSOMAL PROTEIN L14"/>
    <property type="match status" value="1"/>
</dbReference>
<dbReference type="PANTHER" id="PTHR11127:SF2">
    <property type="entry name" value="LARGE RIBOSOMAL SUBUNIT PROTEIN EL14"/>
    <property type="match status" value="1"/>
</dbReference>
<dbReference type="SUPFAM" id="SSF50104">
    <property type="entry name" value="Translation proteins SH3-like domain"/>
    <property type="match status" value="1"/>
</dbReference>
<organism>
    <name type="scientific">Saccharolobus islandicus (strain M.16.27)</name>
    <name type="common">Sulfolobus islandicus</name>
    <dbReference type="NCBI Taxonomy" id="427318"/>
    <lineage>
        <taxon>Archaea</taxon>
        <taxon>Thermoproteota</taxon>
        <taxon>Thermoprotei</taxon>
        <taxon>Sulfolobales</taxon>
        <taxon>Sulfolobaceae</taxon>
        <taxon>Saccharolobus</taxon>
    </lineage>
</organism>
<keyword id="KW-0687">Ribonucleoprotein</keyword>
<keyword id="KW-0689">Ribosomal protein</keyword>
<sequence>MPAIEVGRICVKVKGREAGSKCVIVDIIDDNFVLVTGPKDISGVKRRRVNILHLEPTDKKIDIQKGASDEEVRKKIEEAGLTEYMKERIKIKIPTL</sequence>
<feature type="chain" id="PRO_1000212705" description="Large ribosomal subunit protein eL14">
    <location>
        <begin position="1"/>
        <end position="96"/>
    </location>
</feature>
<reference key="1">
    <citation type="journal article" date="2009" name="Proc. Natl. Acad. Sci. U.S.A.">
        <title>Biogeography of the Sulfolobus islandicus pan-genome.</title>
        <authorList>
            <person name="Reno M.L."/>
            <person name="Held N.L."/>
            <person name="Fields C.J."/>
            <person name="Burke P.V."/>
            <person name="Whitaker R.J."/>
        </authorList>
    </citation>
    <scope>NUCLEOTIDE SEQUENCE [LARGE SCALE GENOMIC DNA]</scope>
    <source>
        <strain>M.16.27</strain>
    </source>
</reference>